<sequence length="142" mass="15491">MAAAVAAAGAGEPLSPEELVPKAEAEKAEEDLEEDDDDELDETLSERLWGLTEMFPERVRSAAGATFDLSLFVAQKMYRFSRAALWIGTTSFMILVLPVVFETEKLQMEQQQQLQQRQILLGPNTGLSGGMPGALPPLPGKI</sequence>
<feature type="initiator methionine" description="Removed" evidence="3">
    <location>
        <position position="1"/>
    </location>
</feature>
<feature type="chain" id="PRO_0000383359" description="Mitochondrial import receptor subunit TOM22 homolog">
    <location>
        <begin position="2"/>
        <end position="142"/>
    </location>
</feature>
<feature type="topological domain" description="Cytoplasmic" evidence="4">
    <location>
        <begin position="2"/>
        <end position="82"/>
    </location>
</feature>
<feature type="transmembrane region" description="Helical" evidence="4">
    <location>
        <begin position="83"/>
        <end position="103"/>
    </location>
</feature>
<feature type="topological domain" description="Mitochondrial intermembrane" evidence="4">
    <location>
        <begin position="104"/>
        <end position="142"/>
    </location>
</feature>
<feature type="region of interest" description="Disordered" evidence="5">
    <location>
        <begin position="1"/>
        <end position="40"/>
    </location>
</feature>
<feature type="region of interest" description="Import sequence; necessary for mitochondrion outer membrane localization and integration in the TOM complex">
    <location>
        <begin position="41"/>
        <end position="50"/>
    </location>
</feature>
<feature type="region of interest" description="TMD; necessary for mitochondrion outer membrane localization and integration in the TOM complex">
    <location>
        <begin position="83"/>
        <end position="103"/>
    </location>
</feature>
<feature type="region of interest" description="C-tail signal; necessary for mitochondrion outer membrane localization and integration in the TOM complex">
    <location>
        <begin position="123"/>
        <end position="142"/>
    </location>
</feature>
<feature type="compositionally biased region" description="Low complexity" evidence="5">
    <location>
        <begin position="1"/>
        <end position="11"/>
    </location>
</feature>
<feature type="compositionally biased region" description="Acidic residues" evidence="5">
    <location>
        <begin position="27"/>
        <end position="40"/>
    </location>
</feature>
<feature type="modified residue" description="N-acetylalanine" evidence="3">
    <location>
        <position position="2"/>
    </location>
</feature>
<feature type="modified residue" description="Phosphoserine" evidence="9">
    <location>
        <position position="15"/>
    </location>
</feature>
<feature type="modified residue" description="Phosphothreonine" evidence="3">
    <location>
        <position position="43"/>
    </location>
</feature>
<feature type="modified residue" description="Phosphoserine" evidence="2">
    <location>
        <position position="45"/>
    </location>
</feature>
<feature type="mutagenesis site" description="Inhibits localization to the mitochondrion outer membrane." evidence="6">
    <original>E</original>
    <variation>Q</variation>
    <location>
        <position position="42"/>
    </location>
</feature>
<feature type="mutagenesis site" description="Inhibits localization to the mitochondrion outer membrane." evidence="6">
    <original>E</original>
    <variation>P</variation>
    <location>
        <position position="46"/>
    </location>
</feature>
<feature type="mutagenesis site" description="Inhibits localization to the mitochondrion outer membrane." evidence="6">
    <original>W</original>
    <variation>P</variation>
    <location>
        <position position="49"/>
    </location>
</feature>
<feature type="mutagenesis site" description="Inhibits localization to the mitochondrion outer membrane." evidence="6">
    <original>P</original>
    <variation>A</variation>
    <location>
        <position position="98"/>
    </location>
</feature>
<comment type="function">
    <text evidence="3 7">Central receptor component of the translocase of the outer membrane of mitochondria (TOM complex) responsible for the recognition and translocation of cytosolically synthesized mitochondrial preproteins. Together with the peripheral receptor TOM20 functions as the transit peptide receptor and facilitates the movement of preproteins into the translocation pore (By similarity). Required for the translocation across the mitochondrial outer membrane of cytochrome P450 monooxygenases (PubMed:19401463).</text>
</comment>
<comment type="subunit">
    <text evidence="1 6">Forms part of the preprotein translocase complex of the outer mitochondrial membrane (TOM complex) which consists of at least 7 different proteins (TOMM5, TOMM6, TOMM7, TOMM20, TOMM22, TOMM40 and TOMM70). Interacts with TOMM40 (By similarity). Interacts with PPP2R2B.</text>
</comment>
<comment type="subcellular location">
    <subcellularLocation>
        <location>Mitochondrion outer membrane</location>
        <topology>Single-pass membrane protein</topology>
    </subcellularLocation>
</comment>
<comment type="domain">
    <text evidence="1">The N-terminal domain (residues 1-60) is important for binding to the unfolded mature imported proteins. Residues (47-69) of the cytoplasmic domain interacts with TOMM20 while the C-terminal segment (residues 61-80) binds presequence of preproteins (By similarity). Requires the transmembrane domain (TMD), a short segment (the import sequence) in the cytoplasmic domain localizing separately from the TMD and the C-tail signal in the C-terminal domain for efficient targeting and integration into the TOM complex.</text>
</comment>
<comment type="similarity">
    <text evidence="8">Belongs to the Tom22 family.</text>
</comment>
<protein>
    <recommendedName>
        <fullName>Mitochondrial import receptor subunit TOM22 homolog</fullName>
        <shortName>rTOM22</shortName>
    </recommendedName>
    <alternativeName>
        <fullName>Translocase of outer membrane 22 kDa subunit homolog</fullName>
    </alternativeName>
</protein>
<gene>
    <name type="primary">Tomm22</name>
    <name type="synonym">Tom22</name>
</gene>
<keyword id="KW-0007">Acetylation</keyword>
<keyword id="KW-0472">Membrane</keyword>
<keyword id="KW-0496">Mitochondrion</keyword>
<keyword id="KW-1000">Mitochondrion outer membrane</keyword>
<keyword id="KW-0597">Phosphoprotein</keyword>
<keyword id="KW-0653">Protein transport</keyword>
<keyword id="KW-0675">Receptor</keyword>
<keyword id="KW-1185">Reference proteome</keyword>
<keyword id="KW-0811">Translocation</keyword>
<keyword id="KW-0812">Transmembrane</keyword>
<keyword id="KW-1133">Transmembrane helix</keyword>
<keyword id="KW-0813">Transport</keyword>
<organism>
    <name type="scientific">Rattus norvegicus</name>
    <name type="common">Rat</name>
    <dbReference type="NCBI Taxonomy" id="10116"/>
    <lineage>
        <taxon>Eukaryota</taxon>
        <taxon>Metazoa</taxon>
        <taxon>Chordata</taxon>
        <taxon>Craniata</taxon>
        <taxon>Vertebrata</taxon>
        <taxon>Euteleostomi</taxon>
        <taxon>Mammalia</taxon>
        <taxon>Eutheria</taxon>
        <taxon>Euarchontoglires</taxon>
        <taxon>Glires</taxon>
        <taxon>Rodentia</taxon>
        <taxon>Myomorpha</taxon>
        <taxon>Muroidea</taxon>
        <taxon>Muridae</taxon>
        <taxon>Murinae</taxon>
        <taxon>Rattus</taxon>
    </lineage>
</organism>
<dbReference type="EMBL" id="AB162854">
    <property type="protein sequence ID" value="BAD11364.1"/>
    <property type="molecule type" value="mRNA"/>
</dbReference>
<dbReference type="EMBL" id="CH473950">
    <property type="protein sequence ID" value="EDM15790.1"/>
    <property type="molecule type" value="Genomic_DNA"/>
</dbReference>
<dbReference type="EMBL" id="BC098639">
    <property type="protein sequence ID" value="AAH98639.1"/>
    <property type="molecule type" value="mRNA"/>
</dbReference>
<dbReference type="RefSeq" id="NP_997679.1">
    <property type="nucleotide sequence ID" value="NM_212514.2"/>
</dbReference>
<dbReference type="SMR" id="Q75Q41"/>
<dbReference type="CORUM" id="Q75Q41"/>
<dbReference type="FunCoup" id="Q75Q41">
    <property type="interactions" value="3623"/>
</dbReference>
<dbReference type="IntAct" id="Q75Q41">
    <property type="interactions" value="1"/>
</dbReference>
<dbReference type="STRING" id="10116.ENSRNOP00000019323"/>
<dbReference type="iPTMnet" id="Q75Q41"/>
<dbReference type="PhosphoSitePlus" id="Q75Q41"/>
<dbReference type="jPOST" id="Q75Q41"/>
<dbReference type="PaxDb" id="10116-ENSRNOP00000019323"/>
<dbReference type="GeneID" id="300075"/>
<dbReference type="KEGG" id="rno:300075"/>
<dbReference type="UCSC" id="RGD:1303260">
    <property type="organism name" value="rat"/>
</dbReference>
<dbReference type="AGR" id="RGD:1303260"/>
<dbReference type="CTD" id="56993"/>
<dbReference type="RGD" id="1303260">
    <property type="gene designation" value="Tomm22"/>
</dbReference>
<dbReference type="VEuPathDB" id="HostDB:ENSRNOG00000014058"/>
<dbReference type="eggNOG" id="KOG4111">
    <property type="taxonomic scope" value="Eukaryota"/>
</dbReference>
<dbReference type="HOGENOM" id="CLU_108175_1_0_1"/>
<dbReference type="InParanoid" id="Q75Q41"/>
<dbReference type="OrthoDB" id="10016939at2759"/>
<dbReference type="PhylomeDB" id="Q75Q41"/>
<dbReference type="TreeFam" id="TF106201"/>
<dbReference type="Reactome" id="R-RNO-5205685">
    <property type="pathway name" value="PINK1-PRKN Mediated Mitophagy"/>
</dbReference>
<dbReference type="PRO" id="PR:Q75Q41"/>
<dbReference type="Proteomes" id="UP000002494">
    <property type="component" value="Chromosome 7"/>
</dbReference>
<dbReference type="Proteomes" id="UP000234681">
    <property type="component" value="Chromosome 7"/>
</dbReference>
<dbReference type="Bgee" id="ENSRNOG00000014058">
    <property type="expression patterns" value="Expressed in thymus and 20 other cell types or tissues"/>
</dbReference>
<dbReference type="GO" id="GO:0016020">
    <property type="term" value="C:membrane"/>
    <property type="evidence" value="ECO:0000266"/>
    <property type="project" value="RGD"/>
</dbReference>
<dbReference type="GO" id="GO:0005742">
    <property type="term" value="C:mitochondrial outer membrane translocase complex"/>
    <property type="evidence" value="ECO:0000314"/>
    <property type="project" value="RGD"/>
</dbReference>
<dbReference type="GO" id="GO:0030943">
    <property type="term" value="F:mitochondrion targeting sequence binding"/>
    <property type="evidence" value="ECO:0000266"/>
    <property type="project" value="RGD"/>
</dbReference>
<dbReference type="GO" id="GO:0008320">
    <property type="term" value="F:protein transmembrane transporter activity"/>
    <property type="evidence" value="ECO:0000315"/>
    <property type="project" value="BHF-UCL"/>
</dbReference>
<dbReference type="GO" id="GO:0043065">
    <property type="term" value="P:positive regulation of apoptotic process"/>
    <property type="evidence" value="ECO:0000315"/>
    <property type="project" value="RGD"/>
</dbReference>
<dbReference type="GO" id="GO:0051204">
    <property type="term" value="P:protein insertion into mitochondrial membrane"/>
    <property type="evidence" value="ECO:0000315"/>
    <property type="project" value="RGD"/>
</dbReference>
<dbReference type="GO" id="GO:0045040">
    <property type="term" value="P:protein insertion into mitochondrial outer membrane"/>
    <property type="evidence" value="ECO:0000266"/>
    <property type="project" value="RGD"/>
</dbReference>
<dbReference type="GO" id="GO:0006626">
    <property type="term" value="P:protein targeting to mitochondrion"/>
    <property type="evidence" value="ECO:0000315"/>
    <property type="project" value="UniProtKB"/>
</dbReference>
<dbReference type="CDD" id="cd22884">
    <property type="entry name" value="TOM22"/>
    <property type="match status" value="1"/>
</dbReference>
<dbReference type="InterPro" id="IPR005683">
    <property type="entry name" value="Tom22"/>
</dbReference>
<dbReference type="PANTHER" id="PTHR12504">
    <property type="entry name" value="MITOCHONDRIAL IMPORT RECEPTOR SUBUNIT TOM22"/>
    <property type="match status" value="1"/>
</dbReference>
<dbReference type="PANTHER" id="PTHR12504:SF0">
    <property type="entry name" value="MITOCHONDRIAL IMPORT RECEPTOR SUBUNIT TOM22 HOMOLOG"/>
    <property type="match status" value="1"/>
</dbReference>
<dbReference type="Pfam" id="PF04281">
    <property type="entry name" value="Tom22"/>
    <property type="match status" value="1"/>
</dbReference>
<accession>Q75Q41</accession>
<reference key="1">
    <citation type="journal article" date="2004" name="J. Biol. Chem.">
        <title>Targeting and assembly of rat mitochondrial translocase of outer membrane 22 (TOM22) into the TOM complex.</title>
        <authorList>
            <person name="Nakamura Y."/>
            <person name="Suzuki H."/>
            <person name="Sakaguchi M."/>
            <person name="Mihara K."/>
        </authorList>
    </citation>
    <scope>NUCLEOTIDE SEQUENCE [MRNA]</scope>
</reference>
<reference key="2">
    <citation type="submission" date="2005-09" db="EMBL/GenBank/DDBJ databases">
        <authorList>
            <person name="Mural R.J."/>
            <person name="Adams M.D."/>
            <person name="Myers E.W."/>
            <person name="Smith H.O."/>
            <person name="Venter J.C."/>
        </authorList>
    </citation>
    <scope>NUCLEOTIDE SEQUENCE [LARGE SCALE GENOMIC DNA]</scope>
    <source>
        <strain>Brown Norway</strain>
    </source>
</reference>
<reference key="3">
    <citation type="journal article" date="2004" name="Genome Res.">
        <title>The status, quality, and expansion of the NIH full-length cDNA project: the Mammalian Gene Collection (MGC).</title>
        <authorList>
            <consortium name="The MGC Project Team"/>
        </authorList>
    </citation>
    <scope>NUCLEOTIDE SEQUENCE [LARGE SCALE MRNA]</scope>
    <source>
        <tissue>Liver</tissue>
    </source>
</reference>
<reference key="4">
    <citation type="journal article" date="2005" name="J. Biol. Chem.">
        <title>Unfolding-resistant translocase targeting: a novel mechanism for outer mitochondrial membrane localization exemplified by the Bbeta2 regulatory subunit of protein phosphatase 2A.</title>
        <authorList>
            <person name="Dagda R.K."/>
            <person name="Barwacz C.A."/>
            <person name="Cribbs J.T."/>
            <person name="Strack S."/>
        </authorList>
    </citation>
    <scope>IDENTIFICATION IN THE TOM COMPLEX</scope>
    <scope>INTERACTION WITH PPP2R2B</scope>
    <scope>MUTAGENESIS OF GLU-42; GLU-46; TRP-49 AND PRO-98</scope>
</reference>
<reference key="5">
    <citation type="journal article" date="2009" name="J. Biol. Chem.">
        <title>Mitochondrial targeting of cytochrome P450 proteins containing NH2-terminal chimeric signals involves an unusual TOM20/TOM22 bypass mechanism.</title>
        <authorList>
            <person name="Anandatheerthavarada H.K."/>
            <person name="Sepuri N.B."/>
            <person name="Avadhani N.G."/>
        </authorList>
    </citation>
    <scope>FUNCTION</scope>
</reference>
<reference key="6">
    <citation type="journal article" date="2012" name="Nat. Commun.">
        <title>Quantitative maps of protein phosphorylation sites across 14 different rat organs and tissues.</title>
        <authorList>
            <person name="Lundby A."/>
            <person name="Secher A."/>
            <person name="Lage K."/>
            <person name="Nordsborg N.B."/>
            <person name="Dmytriyev A."/>
            <person name="Lundby C."/>
            <person name="Olsen J.V."/>
        </authorList>
    </citation>
    <scope>PHOSPHORYLATION [LARGE SCALE ANALYSIS] AT SER-15</scope>
    <scope>IDENTIFICATION BY MASS SPECTROMETRY [LARGE SCALE ANALYSIS]</scope>
</reference>
<proteinExistence type="evidence at protein level"/>
<evidence type="ECO:0000250" key="1"/>
<evidence type="ECO:0000250" key="2">
    <source>
        <dbReference type="UniProtKB" id="Q9CPQ3"/>
    </source>
</evidence>
<evidence type="ECO:0000250" key="3">
    <source>
        <dbReference type="UniProtKB" id="Q9NS69"/>
    </source>
</evidence>
<evidence type="ECO:0000255" key="4"/>
<evidence type="ECO:0000256" key="5">
    <source>
        <dbReference type="SAM" id="MobiDB-lite"/>
    </source>
</evidence>
<evidence type="ECO:0000269" key="6">
    <source>
    </source>
</evidence>
<evidence type="ECO:0000269" key="7">
    <source>
    </source>
</evidence>
<evidence type="ECO:0000305" key="8"/>
<evidence type="ECO:0007744" key="9">
    <source>
    </source>
</evidence>
<name>TOM22_RAT</name>